<comment type="function">
    <text evidence="1">Involved in the active translocation of vitamin B12 (cyanocobalamin) across the outer membrane to the periplasmic space. It derives its energy for transport by interacting with the trans-periplasmic membrane protein TonB.</text>
</comment>
<comment type="subcellular location">
    <subcellularLocation>
        <location evidence="1">Cell outer membrane</location>
        <topology evidence="1">Multi-pass membrane protein</topology>
    </subcellularLocation>
</comment>
<comment type="similarity">
    <text evidence="1">Belongs to the TonB-dependent receptor family. BtuB (TC 1.B.14.3.1) subfamily.</text>
</comment>
<comment type="sequence caution" evidence="3">
    <conflict type="erroneous initiation">
        <sequence resource="EMBL-CDS" id="ABU78986"/>
    </conflict>
</comment>
<accession>A7ML93</accession>
<name>BTUB_CROS8</name>
<proteinExistence type="inferred from homology"/>
<organism>
    <name type="scientific">Cronobacter sakazakii (strain ATCC BAA-894)</name>
    <name type="common">Enterobacter sakazakii</name>
    <dbReference type="NCBI Taxonomy" id="290339"/>
    <lineage>
        <taxon>Bacteria</taxon>
        <taxon>Pseudomonadati</taxon>
        <taxon>Pseudomonadota</taxon>
        <taxon>Gammaproteobacteria</taxon>
        <taxon>Enterobacterales</taxon>
        <taxon>Enterobacteriaceae</taxon>
        <taxon>Cronobacter</taxon>
    </lineage>
</organism>
<feature type="signal peptide" evidence="1">
    <location>
        <begin position="1"/>
        <end position="20"/>
    </location>
</feature>
<feature type="chain" id="PRO_0000316876" description="Vitamin B12 transporter BtuB">
    <location>
        <begin position="21"/>
        <end position="616"/>
    </location>
</feature>
<feature type="transmembrane region" description="Beta stranded" evidence="1">
    <location>
        <begin position="158"/>
        <end position="165"/>
    </location>
</feature>
<feature type="transmembrane region" description="Beta stranded" evidence="1">
    <location>
        <begin position="169"/>
        <end position="178"/>
    </location>
</feature>
<feature type="transmembrane region" description="Beta stranded" evidence="1">
    <location>
        <begin position="184"/>
        <end position="195"/>
    </location>
</feature>
<feature type="transmembrane region" description="Beta stranded" evidence="1">
    <location>
        <begin position="217"/>
        <end position="227"/>
    </location>
</feature>
<feature type="transmembrane region" description="Beta stranded" evidence="1">
    <location>
        <begin position="232"/>
        <end position="248"/>
    </location>
</feature>
<feature type="transmembrane region" description="Beta stranded" evidence="1">
    <location>
        <begin position="265"/>
        <end position="279"/>
    </location>
</feature>
<feature type="transmembrane region" description="Beta stranded" evidence="1">
    <location>
        <begin position="281"/>
        <end position="298"/>
    </location>
</feature>
<feature type="transmembrane region" description="Beta stranded" evidence="1">
    <location>
        <begin position="311"/>
        <end position="327"/>
    </location>
</feature>
<feature type="transmembrane region" description="Beta stranded" evidence="1">
    <location>
        <begin position="330"/>
        <end position="339"/>
    </location>
</feature>
<feature type="transmembrane region" description="Beta stranded" evidence="1">
    <location>
        <begin position="355"/>
        <end position="371"/>
    </location>
</feature>
<feature type="transmembrane region" description="Beta stranded" evidence="1">
    <location>
        <begin position="373"/>
        <end position="383"/>
    </location>
</feature>
<feature type="transmembrane region" description="Beta stranded" evidence="1">
    <location>
        <begin position="387"/>
        <end position="402"/>
    </location>
</feature>
<feature type="transmembrane region" description="Beta stranded" evidence="1">
    <location>
        <begin position="405"/>
        <end position="419"/>
    </location>
</feature>
<feature type="transmembrane region" description="Beta stranded" evidence="1">
    <location>
        <begin position="436"/>
        <end position="445"/>
    </location>
</feature>
<feature type="transmembrane region" description="Beta stranded" evidence="1">
    <location>
        <begin position="451"/>
        <end position="460"/>
    </location>
</feature>
<feature type="transmembrane region" description="Beta stranded" evidence="1">
    <location>
        <begin position="475"/>
        <end position="492"/>
    </location>
</feature>
<feature type="transmembrane region" description="Beta stranded" evidence="1">
    <location>
        <begin position="496"/>
        <end position="511"/>
    </location>
</feature>
<feature type="transmembrane region" description="Beta stranded" evidence="1">
    <location>
        <begin position="519"/>
        <end position="531"/>
    </location>
</feature>
<feature type="transmembrane region" description="Beta stranded" evidence="1">
    <location>
        <begin position="537"/>
        <end position="552"/>
    </location>
</feature>
<feature type="transmembrane region" description="Beta stranded" evidence="1">
    <location>
        <begin position="560"/>
        <end position="574"/>
    </location>
</feature>
<feature type="transmembrane region" description="Beta stranded" evidence="1">
    <location>
        <begin position="587"/>
        <end position="598"/>
    </location>
</feature>
<feature type="transmembrane region" description="Beta stranded" evidence="1">
    <location>
        <begin position="604"/>
        <end position="616"/>
    </location>
</feature>
<feature type="domain" description="TBDR plug" evidence="2">
    <location>
        <begin position="38"/>
        <end position="152"/>
    </location>
</feature>
<feature type="domain" description="TBDR beta-barrel" evidence="2">
    <location>
        <begin position="155"/>
        <end position="616"/>
    </location>
</feature>
<feature type="short sequence motif" description="TonB box">
    <location>
        <begin position="26"/>
        <end position="33"/>
    </location>
</feature>
<feature type="short sequence motif" description="TonB C-terminal box">
    <location>
        <begin position="599"/>
        <end position="616"/>
    </location>
</feature>
<feature type="binding site" evidence="1">
    <location>
        <position position="83"/>
    </location>
    <ligand>
        <name>cyanocob(III)alamin</name>
        <dbReference type="ChEBI" id="CHEBI:17439"/>
    </ligand>
</feature>
<feature type="binding site" evidence="1">
    <location>
        <position position="85"/>
    </location>
    <ligand>
        <name>cyanocob(III)alamin</name>
        <dbReference type="ChEBI" id="CHEBI:17439"/>
    </ligand>
</feature>
<feature type="binding site" evidence="1">
    <location>
        <position position="92"/>
    </location>
    <ligand>
        <name>cyanocob(III)alamin</name>
        <dbReference type="ChEBI" id="CHEBI:17439"/>
    </ligand>
</feature>
<feature type="binding site" evidence="1">
    <location>
        <begin position="110"/>
        <end position="111"/>
    </location>
    <ligand>
        <name>cyanocob(III)alamin</name>
        <dbReference type="ChEBI" id="CHEBI:17439"/>
    </ligand>
</feature>
<feature type="binding site" evidence="1">
    <location>
        <position position="199"/>
    </location>
    <ligand>
        <name>Ca(2+)</name>
        <dbReference type="ChEBI" id="CHEBI:29108"/>
        <label>1</label>
    </ligand>
</feature>
<feature type="binding site" evidence="1">
    <location>
        <position position="211"/>
    </location>
    <ligand>
        <name>Ca(2+)</name>
        <dbReference type="ChEBI" id="CHEBI:29108"/>
        <label>1</label>
    </ligand>
</feature>
<feature type="binding site" evidence="1">
    <location>
        <position position="213"/>
    </location>
    <ligand>
        <name>Ca(2+)</name>
        <dbReference type="ChEBI" id="CHEBI:29108"/>
        <label>1</label>
    </ligand>
</feature>
<feature type="binding site" evidence="1">
    <location>
        <position position="213"/>
    </location>
    <ligand>
        <name>Ca(2+)</name>
        <dbReference type="ChEBI" id="CHEBI:29108"/>
        <label>2</label>
    </ligand>
</feature>
<feature type="binding site" evidence="1">
    <location>
        <position position="215"/>
    </location>
    <ligand>
        <name>Ca(2+)</name>
        <dbReference type="ChEBI" id="CHEBI:29108"/>
        <label>1</label>
    </ligand>
</feature>
<feature type="binding site" evidence="1">
    <location>
        <position position="215"/>
    </location>
    <ligand>
        <name>Ca(2+)</name>
        <dbReference type="ChEBI" id="CHEBI:29108"/>
        <label>2</label>
    </ligand>
</feature>
<feature type="binding site" evidence="1">
    <location>
        <position position="249"/>
    </location>
    <ligand>
        <name>Ca(2+)</name>
        <dbReference type="ChEBI" id="CHEBI:29108"/>
        <label>2</label>
    </ligand>
</feature>
<feature type="binding site" evidence="1">
    <location>
        <position position="250"/>
    </location>
    <ligand>
        <name>Ca(2+)</name>
        <dbReference type="ChEBI" id="CHEBI:29108"/>
        <label>1</label>
    </ligand>
</feature>
<feature type="binding site" evidence="1">
    <location>
        <position position="250"/>
    </location>
    <ligand>
        <name>Ca(2+)</name>
        <dbReference type="ChEBI" id="CHEBI:29108"/>
        <label>2</label>
    </ligand>
</feature>
<feature type="binding site" evidence="1">
    <location>
        <position position="263"/>
    </location>
    <ligand>
        <name>Ca(2+)</name>
        <dbReference type="ChEBI" id="CHEBI:29108"/>
        <label>2</label>
    </ligand>
</feature>
<feature type="binding site" evidence="1">
    <location>
        <position position="311"/>
    </location>
    <ligand>
        <name>cyanocob(III)alamin</name>
        <dbReference type="ChEBI" id="CHEBI:17439"/>
    </ligand>
</feature>
<feature type="binding site" evidence="1">
    <location>
        <position position="519"/>
    </location>
    <ligand>
        <name>cyanocob(III)alamin</name>
        <dbReference type="ChEBI" id="CHEBI:17439"/>
    </ligand>
</feature>
<sequence length="616" mass="68200">MIKKISLLTALSVTAFSGWAQDSGSDSLVVTANRFQQPVNTVLAPTSVVTREDIERWQANTVIDVMRRLPGVDTAQSGGMGQLSSLFIRGTNSSHVLILVDGIRLNQAGVTGSSDLSQFPLALVQRIEYIRGPRSAVYGSDAIGGVVNIITTRAKDGTTLNAGIGSHSYQNYGGSTQQTLGDNTRVTLAGDYTYTRGFDVVAEGNNGGLAQPDRDGFMNKTLYGALEHAFSDQWTGFVRGYGYSNRTAYDGYYNSFTPDVLVDTRQLYSQTWDAGLRFNNDLFHSQLLSSYSHSKDYNYDPHLGRYDSTATLDEIKQYNVQWTNAVDVGHGNIGAGVDWQKQSTEPGTSYVTNGYDLRNTGVYLTALQKFGDVTLEGAVRSDDNSQFGRHGTWQSSAAWEFIEGYRFIASYGTAYKAPNLGQLYGFYGNDHLDPEESKQWEGAFEGLTAGVNWRVSAYRNDVDNLIDFNNNLQEYYNVGKARIKGVEATASFDTGPLTHTLGYDYVDARNAATNALLVRRAKQQVKYQLDTQLYDFDWSLTYHYLGTRYDTDFSTYPTQNVKLGGVSLWDVAVSYPVTSHLTVRGKIANLFDKDYETAYGYATAGREYTLSGSYTF</sequence>
<evidence type="ECO:0000255" key="1">
    <source>
        <dbReference type="HAMAP-Rule" id="MF_01531"/>
    </source>
</evidence>
<evidence type="ECO:0000255" key="2">
    <source>
        <dbReference type="PROSITE-ProRule" id="PRU01360"/>
    </source>
</evidence>
<evidence type="ECO:0000305" key="3"/>
<protein>
    <recommendedName>
        <fullName evidence="1">Vitamin B12 transporter BtuB</fullName>
    </recommendedName>
    <alternativeName>
        <fullName evidence="1">Cobalamin receptor</fullName>
    </alternativeName>
    <alternativeName>
        <fullName evidence="1">Outer membrane cobalamin translocator</fullName>
    </alternativeName>
</protein>
<dbReference type="EMBL" id="CP000783">
    <property type="protein sequence ID" value="ABU78986.1"/>
    <property type="status" value="ALT_INIT"/>
    <property type="molecule type" value="Genomic_DNA"/>
</dbReference>
<dbReference type="RefSeq" id="WP_041460752.1">
    <property type="nucleotide sequence ID" value="NC_009778.1"/>
</dbReference>
<dbReference type="SMR" id="A7ML93"/>
<dbReference type="KEGG" id="esa:ESA_03800"/>
<dbReference type="PATRIC" id="fig|290339.8.peg.3374"/>
<dbReference type="HOGENOM" id="CLU_008287_18_5_6"/>
<dbReference type="Proteomes" id="UP000000260">
    <property type="component" value="Chromosome"/>
</dbReference>
<dbReference type="GO" id="GO:0009279">
    <property type="term" value="C:cell outer membrane"/>
    <property type="evidence" value="ECO:0007669"/>
    <property type="project" value="UniProtKB-SubCell"/>
</dbReference>
<dbReference type="GO" id="GO:0046930">
    <property type="term" value="C:pore complex"/>
    <property type="evidence" value="ECO:0007669"/>
    <property type="project" value="UniProtKB-KW"/>
</dbReference>
<dbReference type="GO" id="GO:0015420">
    <property type="term" value="F:ABC-type vitamin B12 transporter activity"/>
    <property type="evidence" value="ECO:0007669"/>
    <property type="project" value="InterPro"/>
</dbReference>
<dbReference type="GO" id="GO:0046872">
    <property type="term" value="F:metal ion binding"/>
    <property type="evidence" value="ECO:0007669"/>
    <property type="project" value="UniProtKB-KW"/>
</dbReference>
<dbReference type="GO" id="GO:0015288">
    <property type="term" value="F:porin activity"/>
    <property type="evidence" value="ECO:0007669"/>
    <property type="project" value="UniProtKB-KW"/>
</dbReference>
<dbReference type="GO" id="GO:0006811">
    <property type="term" value="P:monoatomic ion transport"/>
    <property type="evidence" value="ECO:0007669"/>
    <property type="project" value="UniProtKB-KW"/>
</dbReference>
<dbReference type="CDD" id="cd01347">
    <property type="entry name" value="ligand_gated_channel"/>
    <property type="match status" value="1"/>
</dbReference>
<dbReference type="FunFam" id="2.170.130.10:FF:000002">
    <property type="entry name" value="Vitamin B12 transporter BtuB"/>
    <property type="match status" value="1"/>
</dbReference>
<dbReference type="FunFam" id="2.40.170.20:FF:000001">
    <property type="entry name" value="Vitamin B12 transporter BtuB"/>
    <property type="match status" value="1"/>
</dbReference>
<dbReference type="Gene3D" id="2.40.170.20">
    <property type="entry name" value="TonB-dependent receptor, beta-barrel domain"/>
    <property type="match status" value="1"/>
</dbReference>
<dbReference type="Gene3D" id="2.170.130.10">
    <property type="entry name" value="TonB-dependent receptor, plug domain"/>
    <property type="match status" value="1"/>
</dbReference>
<dbReference type="HAMAP" id="MF_01531">
    <property type="entry name" value="BtuB"/>
    <property type="match status" value="1"/>
</dbReference>
<dbReference type="InterPro" id="IPR010101">
    <property type="entry name" value="B12_transptr_BtuB"/>
</dbReference>
<dbReference type="InterPro" id="IPR012910">
    <property type="entry name" value="Plug_dom"/>
</dbReference>
<dbReference type="InterPro" id="IPR037066">
    <property type="entry name" value="Plug_dom_sf"/>
</dbReference>
<dbReference type="InterPro" id="IPR039426">
    <property type="entry name" value="TonB-dep_rcpt-like"/>
</dbReference>
<dbReference type="InterPro" id="IPR000531">
    <property type="entry name" value="TonB-dep_rcpt_b-brl"/>
</dbReference>
<dbReference type="InterPro" id="IPR010916">
    <property type="entry name" value="TonB_box_CS"/>
</dbReference>
<dbReference type="InterPro" id="IPR036942">
    <property type="entry name" value="TonB_rcpt_b-brl_sf"/>
</dbReference>
<dbReference type="InterPro" id="IPR010917">
    <property type="entry name" value="TonB_rcpt_CS"/>
</dbReference>
<dbReference type="NCBIfam" id="NF007926">
    <property type="entry name" value="PRK10641.1"/>
    <property type="match status" value="1"/>
</dbReference>
<dbReference type="NCBIfam" id="TIGR01779">
    <property type="entry name" value="TonB-B12"/>
    <property type="match status" value="1"/>
</dbReference>
<dbReference type="PANTHER" id="PTHR30069:SF53">
    <property type="entry name" value="COLICIN I RECEPTOR-RELATED"/>
    <property type="match status" value="1"/>
</dbReference>
<dbReference type="PANTHER" id="PTHR30069">
    <property type="entry name" value="TONB-DEPENDENT OUTER MEMBRANE RECEPTOR"/>
    <property type="match status" value="1"/>
</dbReference>
<dbReference type="Pfam" id="PF07715">
    <property type="entry name" value="Plug"/>
    <property type="match status" value="1"/>
</dbReference>
<dbReference type="Pfam" id="PF00593">
    <property type="entry name" value="TonB_dep_Rec_b-barrel"/>
    <property type="match status" value="1"/>
</dbReference>
<dbReference type="SUPFAM" id="SSF56935">
    <property type="entry name" value="Porins"/>
    <property type="match status" value="1"/>
</dbReference>
<dbReference type="PROSITE" id="PS00430">
    <property type="entry name" value="TONB_DEPENDENT_REC_1"/>
    <property type="match status" value="1"/>
</dbReference>
<dbReference type="PROSITE" id="PS01156">
    <property type="entry name" value="TONB_DEPENDENT_REC_2"/>
    <property type="match status" value="1"/>
</dbReference>
<dbReference type="PROSITE" id="PS52016">
    <property type="entry name" value="TONB_DEPENDENT_REC_3"/>
    <property type="match status" value="1"/>
</dbReference>
<gene>
    <name evidence="1" type="primary">btuB</name>
    <name type="ordered locus">ESA_03800</name>
</gene>
<reference key="1">
    <citation type="journal article" date="2010" name="PLoS ONE">
        <title>Genome sequence of Cronobacter sakazakii BAA-894 and comparative genomic hybridization analysis with other Cronobacter species.</title>
        <authorList>
            <person name="Kucerova E."/>
            <person name="Clifton S.W."/>
            <person name="Xia X.Q."/>
            <person name="Long F."/>
            <person name="Porwollik S."/>
            <person name="Fulton L."/>
            <person name="Fronick C."/>
            <person name="Minx P."/>
            <person name="Kyung K."/>
            <person name="Warren W."/>
            <person name="Fulton R."/>
            <person name="Feng D."/>
            <person name="Wollam A."/>
            <person name="Shah N."/>
            <person name="Bhonagiri V."/>
            <person name="Nash W.E."/>
            <person name="Hallsworth-Pepin K."/>
            <person name="Wilson R.K."/>
            <person name="McClelland M."/>
            <person name="Forsythe S.J."/>
        </authorList>
    </citation>
    <scope>NUCLEOTIDE SEQUENCE [LARGE SCALE GENOMIC DNA]</scope>
    <source>
        <strain>ATCC BAA-894</strain>
    </source>
</reference>
<keyword id="KW-0106">Calcium</keyword>
<keyword id="KW-0998">Cell outer membrane</keyword>
<keyword id="KW-0406">Ion transport</keyword>
<keyword id="KW-0472">Membrane</keyword>
<keyword id="KW-0479">Metal-binding</keyword>
<keyword id="KW-0626">Porin</keyword>
<keyword id="KW-1185">Reference proteome</keyword>
<keyword id="KW-0732">Signal</keyword>
<keyword id="KW-0798">TonB box</keyword>
<keyword id="KW-0812">Transmembrane</keyword>
<keyword id="KW-1134">Transmembrane beta strand</keyword>
<keyword id="KW-0813">Transport</keyword>